<proteinExistence type="evidence at protein level"/>
<keyword id="KW-0002">3D-structure</keyword>
<keyword id="KW-0963">Cytoplasm</keyword>
<keyword id="KW-0456">Lyase</keyword>
<keyword id="KW-0585">Phenylalanine catabolism</keyword>
<keyword id="KW-0587">Phenylpropanoid metabolism</keyword>
<comment type="function">
    <text evidence="3">This is a key enzyme of plant metabolism catalyzing the first reaction in the biosynthesis from L-phenylalanine of a wide variety of natural products based on the phenylpropane skeleton.</text>
</comment>
<comment type="catalytic activity">
    <reaction evidence="3 4">
        <text>L-phenylalanine = (E)-cinnamate + NH4(+)</text>
        <dbReference type="Rhea" id="RHEA:21384"/>
        <dbReference type="ChEBI" id="CHEBI:15669"/>
        <dbReference type="ChEBI" id="CHEBI:28938"/>
        <dbReference type="ChEBI" id="CHEBI:58095"/>
        <dbReference type="EC" id="4.3.1.24"/>
    </reaction>
</comment>
<comment type="pathway">
    <text evidence="6">Phenylpropanoid metabolism; trans-cinnamate biosynthesis; trans-cinnamate from L-phenylalanine: step 1/1.</text>
</comment>
<comment type="subunit">
    <text evidence="3">Homotetramer.</text>
</comment>
<comment type="subcellular location">
    <subcellularLocation>
        <location evidence="6">Cytoplasm</location>
    </subcellularLocation>
</comment>
<comment type="PTM">
    <text evidence="2">Contains an active site 4-methylidene-imidazol-5-one (MIO), which is formed autocatalytically by cyclization and dehydration of residues Ala-Ser-Gly.</text>
</comment>
<comment type="similarity">
    <text evidence="6">Belongs to the PAL/histidase family.</text>
</comment>
<feature type="chain" id="PRO_0000215406" description="Phenylalanine ammonia-lyase 1">
    <location>
        <begin position="1"/>
        <end position="716"/>
    </location>
</feature>
<feature type="active site" description="Proton donor/acceptor" evidence="2">
    <location>
        <position position="110"/>
    </location>
</feature>
<feature type="binding site" evidence="2">
    <location>
        <position position="260"/>
    </location>
    <ligand>
        <name>(E)-cinnamate</name>
        <dbReference type="ChEBI" id="CHEBI:15669"/>
    </ligand>
</feature>
<feature type="binding site" evidence="2">
    <location>
        <position position="348"/>
    </location>
    <ligand>
        <name>(E)-cinnamate</name>
        <dbReference type="ChEBI" id="CHEBI:15669"/>
    </ligand>
</feature>
<feature type="binding site" evidence="2">
    <location>
        <position position="354"/>
    </location>
    <ligand>
        <name>(E)-cinnamate</name>
        <dbReference type="ChEBI" id="CHEBI:15669"/>
    </ligand>
</feature>
<feature type="binding site" evidence="2">
    <location>
        <position position="384"/>
    </location>
    <ligand>
        <name>(E)-cinnamate</name>
        <dbReference type="ChEBI" id="CHEBI:15669"/>
    </ligand>
</feature>
<feature type="binding site" evidence="1">
    <location>
        <position position="456"/>
    </location>
    <ligand>
        <name>(E)-cinnamate</name>
        <dbReference type="ChEBI" id="CHEBI:15669"/>
    </ligand>
</feature>
<feature type="binding site" evidence="1">
    <location>
        <position position="484"/>
    </location>
    <ligand>
        <name>(E)-cinnamate</name>
        <dbReference type="ChEBI" id="CHEBI:15669"/>
    </ligand>
</feature>
<feature type="binding site" evidence="2">
    <location>
        <position position="487"/>
    </location>
    <ligand>
        <name>(E)-cinnamate</name>
        <dbReference type="ChEBI" id="CHEBI:15669"/>
    </ligand>
</feature>
<feature type="modified residue" description="2,3-didehydroalanine (Ser)" evidence="4">
    <location>
        <position position="203"/>
    </location>
</feature>
<feature type="cross-link" description="5-imidazolinone (Ala-Gly)" evidence="2">
    <location>
        <begin position="202"/>
        <end position="204"/>
    </location>
</feature>
<feature type="mutagenesis site" description="Complete loss of activity." evidence="4">
    <original>S</original>
    <variation>A</variation>
    <location>
        <position position="203"/>
    </location>
</feature>
<feature type="mutagenesis site" description="No loss of activity." evidence="4">
    <original>S</original>
    <variation>A</variation>
    <location>
        <position position="210"/>
    </location>
</feature>
<feature type="helix" evidence="7">
    <location>
        <begin position="30"/>
        <end position="35"/>
    </location>
</feature>
<feature type="helix" evidence="7">
    <location>
        <begin position="41"/>
        <end position="52"/>
    </location>
</feature>
<feature type="strand" evidence="7">
    <location>
        <begin position="55"/>
        <end position="59"/>
    </location>
</feature>
<feature type="helix" evidence="7">
    <location>
        <begin position="66"/>
        <end position="73"/>
    </location>
</feature>
<feature type="strand" evidence="7">
    <location>
        <begin position="81"/>
        <end position="84"/>
    </location>
</feature>
<feature type="helix" evidence="7">
    <location>
        <begin position="86"/>
        <end position="88"/>
    </location>
</feature>
<feature type="helix" evidence="7">
    <location>
        <begin position="89"/>
        <end position="103"/>
    </location>
</feature>
<feature type="turn" evidence="7">
    <location>
        <begin position="105"/>
        <end position="108"/>
    </location>
</feature>
<feature type="turn" evidence="8">
    <location>
        <begin position="110"/>
        <end position="112"/>
    </location>
</feature>
<feature type="helix" evidence="8">
    <location>
        <begin position="117"/>
        <end position="119"/>
    </location>
</feature>
<feature type="strand" evidence="7">
    <location>
        <begin position="122"/>
        <end position="126"/>
    </location>
</feature>
<feature type="helix" evidence="7">
    <location>
        <begin position="129"/>
        <end position="138"/>
    </location>
</feature>
<feature type="strand" evidence="7">
    <location>
        <begin position="145"/>
        <end position="147"/>
    </location>
</feature>
<feature type="helix" evidence="7">
    <location>
        <begin position="153"/>
        <end position="165"/>
    </location>
</feature>
<feature type="turn" evidence="7">
    <location>
        <begin position="166"/>
        <end position="169"/>
    </location>
</feature>
<feature type="helix" evidence="7">
    <location>
        <begin position="176"/>
        <end position="187"/>
    </location>
</feature>
<feature type="strand" evidence="7">
    <location>
        <begin position="195"/>
        <end position="197"/>
    </location>
</feature>
<feature type="helix" evidence="7">
    <location>
        <begin position="206"/>
        <end position="216"/>
    </location>
</feature>
<feature type="helix" evidence="7">
    <location>
        <begin position="234"/>
        <end position="241"/>
    </location>
</feature>
<feature type="strand" evidence="7">
    <location>
        <begin position="244"/>
        <end position="246"/>
    </location>
</feature>
<feature type="helix" evidence="7">
    <location>
        <begin position="254"/>
        <end position="259"/>
    </location>
</feature>
<feature type="helix" evidence="7">
    <location>
        <begin position="263"/>
        <end position="294"/>
    </location>
</feature>
<feature type="helix" evidence="7">
    <location>
        <begin position="298"/>
        <end position="301"/>
    </location>
</feature>
<feature type="helix" evidence="7">
    <location>
        <begin position="303"/>
        <end position="307"/>
    </location>
</feature>
<feature type="helix" evidence="7">
    <location>
        <begin position="312"/>
        <end position="326"/>
    </location>
</feature>
<feature type="helix" evidence="8">
    <location>
        <begin position="331"/>
        <end position="333"/>
    </location>
</feature>
<feature type="strand" evidence="7">
    <location>
        <begin position="345"/>
        <end position="347"/>
    </location>
</feature>
<feature type="helix" evidence="7">
    <location>
        <begin position="351"/>
        <end position="354"/>
    </location>
</feature>
<feature type="helix" evidence="7">
    <location>
        <begin position="356"/>
        <end position="377"/>
    </location>
</feature>
<feature type="strand" evidence="7">
    <location>
        <begin position="384"/>
        <end position="388"/>
    </location>
</feature>
<feature type="turn" evidence="7">
    <location>
        <begin position="389"/>
        <end position="392"/>
    </location>
</feature>
<feature type="strand" evidence="7">
    <location>
        <begin position="393"/>
        <end position="395"/>
    </location>
</feature>
<feature type="helix" evidence="7">
    <location>
        <begin position="403"/>
        <end position="430"/>
    </location>
</feature>
<feature type="turn" evidence="7">
    <location>
        <begin position="433"/>
        <end position="435"/>
    </location>
</feature>
<feature type="helix" evidence="7">
    <location>
        <begin position="441"/>
        <end position="443"/>
    </location>
</feature>
<feature type="helix" evidence="7">
    <location>
        <begin position="449"/>
        <end position="451"/>
    </location>
</feature>
<feature type="helix" evidence="7">
    <location>
        <begin position="456"/>
        <end position="472"/>
    </location>
</feature>
<feature type="turn" evidence="7">
    <location>
        <begin position="484"/>
        <end position="487"/>
    </location>
</feature>
<feature type="strand" evidence="7">
    <location>
        <begin position="488"/>
        <end position="490"/>
    </location>
</feature>
<feature type="helix" evidence="7">
    <location>
        <begin position="494"/>
        <end position="547"/>
    </location>
</feature>
<feature type="turn" evidence="7">
    <location>
        <begin position="551"/>
        <end position="553"/>
    </location>
</feature>
<feature type="helix" evidence="7">
    <location>
        <begin position="560"/>
        <end position="572"/>
    </location>
</feature>
<feature type="helix" evidence="7">
    <location>
        <begin position="575"/>
        <end position="577"/>
    </location>
</feature>
<feature type="turn" evidence="7">
    <location>
        <begin position="578"/>
        <end position="580"/>
    </location>
</feature>
<feature type="helix" evidence="7">
    <location>
        <begin position="588"/>
        <end position="602"/>
    </location>
</feature>
<feature type="helix" evidence="7">
    <location>
        <begin position="605"/>
        <end position="609"/>
    </location>
</feature>
<feature type="helix" evidence="7">
    <location>
        <begin position="611"/>
        <end position="613"/>
    </location>
</feature>
<feature type="helix" evidence="7">
    <location>
        <begin position="616"/>
        <end position="618"/>
    </location>
</feature>
<feature type="helix" evidence="7">
    <location>
        <begin position="619"/>
        <end position="642"/>
    </location>
</feature>
<feature type="helix" evidence="7">
    <location>
        <begin position="651"/>
        <end position="654"/>
    </location>
</feature>
<feature type="helix" evidence="7">
    <location>
        <begin position="658"/>
        <end position="665"/>
    </location>
</feature>
<feature type="turn" evidence="9">
    <location>
        <begin position="666"/>
        <end position="668"/>
    </location>
</feature>
<feature type="helix" evidence="7">
    <location>
        <begin position="681"/>
        <end position="693"/>
    </location>
</feature>
<feature type="turn" evidence="7">
    <location>
        <begin position="694"/>
        <end position="697"/>
    </location>
</feature>
<feature type="helix" evidence="7">
    <location>
        <begin position="698"/>
        <end position="703"/>
    </location>
</feature>
<feature type="turn" evidence="7">
    <location>
        <begin position="704"/>
        <end position="707"/>
    </location>
</feature>
<accession>P24481</accession>
<organism>
    <name type="scientific">Petroselinum crispum</name>
    <name type="common">Parsley</name>
    <name type="synonym">Petroselinum hortense</name>
    <dbReference type="NCBI Taxonomy" id="4043"/>
    <lineage>
        <taxon>Eukaryota</taxon>
        <taxon>Viridiplantae</taxon>
        <taxon>Streptophyta</taxon>
        <taxon>Embryophyta</taxon>
        <taxon>Tracheophyta</taxon>
        <taxon>Spermatophyta</taxon>
        <taxon>Magnoliopsida</taxon>
        <taxon>eudicotyledons</taxon>
        <taxon>Gunneridae</taxon>
        <taxon>Pentapetalae</taxon>
        <taxon>asterids</taxon>
        <taxon>campanulids</taxon>
        <taxon>Apiales</taxon>
        <taxon>Apiaceae</taxon>
        <taxon>Apioideae</taxon>
        <taxon>apioid superclade</taxon>
        <taxon>Apieae</taxon>
        <taxon>Petroselinum</taxon>
    </lineage>
</organism>
<name>PAL1_PETCR</name>
<reference key="1">
    <citation type="journal article" date="1989" name="EMBO J.">
        <title>A phenylalanine ammonia-lyase gene from parsley: structure, regulation and identification of elicitor and light responsive cis-acting elements.</title>
        <authorList>
            <person name="Lois R."/>
            <person name="Dietrich A."/>
            <person name="Hahlbrock K."/>
            <person name="Schulz W."/>
        </authorList>
    </citation>
    <scope>NUCLEOTIDE SEQUENCE [GENOMIC DNA]</scope>
</reference>
<reference key="2">
    <citation type="submission" date="1996-09" db="EMBL/GenBank/DDBJ databases">
        <authorList>
            <person name="Kang X."/>
            <person name="Logemann E."/>
            <person name="Hahlbrock K."/>
        </authorList>
    </citation>
    <scope>NUCLEOTIDE SEQUENCE [GENOMIC DNA]</scope>
</reference>
<reference key="3">
    <citation type="journal article" date="1994" name="FEBS Lett.">
        <title>Serine-202 is the putative precursor of the active site dehydroalanine of phenylalanine ammonia lyase. Site-directed mutagenesis studies on the enzyme from parsley (Petroselinum crispum L.).</title>
        <authorList>
            <person name="Schuster B."/>
            <person name="Retey J."/>
        </authorList>
    </citation>
    <scope>CATALYTIC ACTIVITY</scope>
    <scope>ENZYME MECHANISM</scope>
    <scope>DEHYDRATION AT SER-203</scope>
    <scope>MUTAGENESIS OF SER-203 AND SER-210</scope>
</reference>
<reference key="4">
    <citation type="journal article" date="2004" name="Plant Cell">
        <title>Structural basis for the entrance into the phenylpropanoid metabolism catalyzed by phenylalanine ammonia-lyase.</title>
        <authorList>
            <person name="Ritter H."/>
            <person name="Schulz G.E."/>
        </authorList>
    </citation>
    <scope>X-RAY CRYSTALLOGRAPHY (1.7 ANGSTROMS)</scope>
    <scope>FUNCTION</scope>
    <scope>CATALYTIC ACTIVITY</scope>
    <scope>SUBUNIT</scope>
    <scope>PTM</scope>
</reference>
<gene>
    <name type="primary">PAL1</name>
</gene>
<protein>
    <recommendedName>
        <fullName evidence="5">Phenylalanine ammonia-lyase 1</fullName>
        <ecNumber evidence="3 4">4.3.1.24</ecNumber>
    </recommendedName>
</protein>
<sequence length="716" mass="77829">MENGNGATTNGHVNGNGMDFCMKTEDPLYWGIAAEAMTGSHLDEVKKMVAEYRKPVVKLGGETLTISQVAAISARDGSGVTVELSEAARAGVKASSDWVMDSMNKGTDSYGVTTGFGATSHRRTKQGGALQKELIRFLNAGIFGNGSDNTLPHSATRAAMLVRINTLLQGYSGIRFEILEAITKFLNQNITPCLPLRGTITASGDLVPLSYIAGLLTGRPNSKAVGPTGVILSPEEAFKLAGVEGGFFELQPKEGLALVNGTAVGSGMASMVLFEANILAVLAEVMSAIFAEVMQGKPEFTDHLTHKLKHHPGQIEAAAIMEHILDGSAYVKAAQKLHEMDPLQKPKQDRYALRTSPQWLGPQIEVIRSSTKMIEREINSVNDNPLIDVSRNKAIHGGNFQGTPIGVSMDNTRLAIAAIGKLMFAQFSELVNDFYNNGLPSNLSGGRNPSLDYGFKGAEIAMASYCSELQFLANPVTNHVQSAEQHNQDVNSLGLISSRKTSEAVEILKLMSTTFLVGLCQAIDLRHLEENLKSTVKNTVSSVAKRVLTMGVNGELHPSRFCEKDLLRVVDREYIFAYIDDPCSATYPLMQKLRQTLVEHALKNGDNERNLSTSIFQKIATFEDELKALLPKEVESARAALESGNPAIPNRIEECRSYPLYKFVRKELGTEYLTGEKVTSPGEEFEKVFIAMSKGEIIDPLLECLESWNGAPLPIC</sequence>
<evidence type="ECO:0000250" key="1">
    <source>
        <dbReference type="UniProtKB" id="P11544"/>
    </source>
</evidence>
<evidence type="ECO:0000250" key="2">
    <source>
        <dbReference type="UniProtKB" id="Q68G84"/>
    </source>
</evidence>
<evidence type="ECO:0000269" key="3">
    <source>
    </source>
</evidence>
<evidence type="ECO:0000269" key="4">
    <source>
    </source>
</evidence>
<evidence type="ECO:0000303" key="5">
    <source>
    </source>
</evidence>
<evidence type="ECO:0000305" key="6"/>
<evidence type="ECO:0007829" key="7">
    <source>
        <dbReference type="PDB" id="1W27"/>
    </source>
</evidence>
<evidence type="ECO:0007829" key="8">
    <source>
        <dbReference type="PDB" id="6HQF"/>
    </source>
</evidence>
<evidence type="ECO:0007829" key="9">
    <source>
        <dbReference type="PDB" id="6RGS"/>
    </source>
</evidence>
<dbReference type="EC" id="4.3.1.24" evidence="3 4"/>
<dbReference type="EMBL" id="X15473">
    <property type="protein sequence ID" value="CAA33500.1"/>
    <property type="molecule type" value="Genomic_DNA"/>
</dbReference>
<dbReference type="EMBL" id="X16772">
    <property type="protein sequence ID" value="CAA34715.1"/>
    <property type="molecule type" value="Genomic_DNA"/>
</dbReference>
<dbReference type="EMBL" id="Y07654">
    <property type="protein sequence ID" value="CAA68938.1"/>
    <property type="molecule type" value="Genomic_DNA"/>
</dbReference>
<dbReference type="PIR" id="S04463">
    <property type="entry name" value="S04463"/>
</dbReference>
<dbReference type="PDB" id="1W27">
    <property type="method" value="X-ray"/>
    <property type="resolution" value="1.70 A"/>
    <property type="chains" value="A/B=1-716"/>
</dbReference>
<dbReference type="PDB" id="6F6T">
    <property type="method" value="X-ray"/>
    <property type="resolution" value="1.90 A"/>
    <property type="chains" value="A/B=1-716"/>
</dbReference>
<dbReference type="PDB" id="6H2O">
    <property type="method" value="X-ray"/>
    <property type="resolution" value="1.90 A"/>
    <property type="chains" value="A/B=1-716"/>
</dbReference>
<dbReference type="PDB" id="6HQF">
    <property type="method" value="X-ray"/>
    <property type="resolution" value="1.76 A"/>
    <property type="chains" value="A/B=1-716"/>
</dbReference>
<dbReference type="PDB" id="6RGS">
    <property type="method" value="X-ray"/>
    <property type="resolution" value="2.42 A"/>
    <property type="chains" value="A/B=1-715"/>
</dbReference>
<dbReference type="PDBsum" id="1W27"/>
<dbReference type="PDBsum" id="6F6T"/>
<dbReference type="PDBsum" id="6H2O"/>
<dbReference type="PDBsum" id="6HQF"/>
<dbReference type="PDBsum" id="6RGS"/>
<dbReference type="SMR" id="P24481"/>
<dbReference type="KEGG" id="ag:CAA68938"/>
<dbReference type="BRENDA" id="4.3.1.24">
    <property type="organism ID" value="4694"/>
</dbReference>
<dbReference type="SABIO-RK" id="P24481"/>
<dbReference type="UniPathway" id="UPA00713">
    <property type="reaction ID" value="UER00725"/>
</dbReference>
<dbReference type="EvolutionaryTrace" id="P24481"/>
<dbReference type="GO" id="GO:0005737">
    <property type="term" value="C:cytoplasm"/>
    <property type="evidence" value="ECO:0007669"/>
    <property type="project" value="UniProtKB-SubCell"/>
</dbReference>
<dbReference type="GO" id="GO:0032991">
    <property type="term" value="C:protein-containing complex"/>
    <property type="evidence" value="ECO:0000304"/>
    <property type="project" value="AgBase"/>
</dbReference>
<dbReference type="GO" id="GO:0016597">
    <property type="term" value="F:amino acid binding"/>
    <property type="evidence" value="ECO:0000304"/>
    <property type="project" value="AgBase"/>
</dbReference>
<dbReference type="GO" id="GO:0045548">
    <property type="term" value="F:phenylalanine ammonia-lyase activity"/>
    <property type="evidence" value="ECO:0007669"/>
    <property type="project" value="UniProtKB-EC"/>
</dbReference>
<dbReference type="GO" id="GO:0009800">
    <property type="term" value="P:cinnamic acid biosynthetic process"/>
    <property type="evidence" value="ECO:0007669"/>
    <property type="project" value="UniProtKB-UniPathway"/>
</dbReference>
<dbReference type="GO" id="GO:0006559">
    <property type="term" value="P:L-phenylalanine catabolic process"/>
    <property type="evidence" value="ECO:0007669"/>
    <property type="project" value="UniProtKB-KW"/>
</dbReference>
<dbReference type="CDD" id="cd00332">
    <property type="entry name" value="PAL-HAL"/>
    <property type="match status" value="1"/>
</dbReference>
<dbReference type="FunFam" id="1.10.274.20:FF:000001">
    <property type="entry name" value="Phenylalanine ammonia-lyase"/>
    <property type="match status" value="1"/>
</dbReference>
<dbReference type="FunFam" id="1.10.275.10:FF:000009">
    <property type="entry name" value="Phenylalanine ammonia-lyase"/>
    <property type="match status" value="1"/>
</dbReference>
<dbReference type="FunFam" id="1.20.200.10:FF:000009">
    <property type="entry name" value="Phenylalanine ammonia-lyase"/>
    <property type="match status" value="1"/>
</dbReference>
<dbReference type="Gene3D" id="1.20.200.10">
    <property type="entry name" value="Fumarase/aspartase (Central domain)"/>
    <property type="match status" value="1"/>
</dbReference>
<dbReference type="Gene3D" id="1.10.275.10">
    <property type="entry name" value="Fumarase/aspartase (N-terminal domain)"/>
    <property type="match status" value="1"/>
</dbReference>
<dbReference type="Gene3D" id="1.10.274.20">
    <property type="entry name" value="Phenylalanine ammonia-lyase 1, domain 3"/>
    <property type="match status" value="1"/>
</dbReference>
<dbReference type="InterPro" id="IPR001106">
    <property type="entry name" value="Aromatic_Lyase"/>
</dbReference>
<dbReference type="InterPro" id="IPR024083">
    <property type="entry name" value="Fumarase/histidase_N"/>
</dbReference>
<dbReference type="InterPro" id="IPR008948">
    <property type="entry name" value="L-Aspartase-like"/>
</dbReference>
<dbReference type="InterPro" id="IPR022313">
    <property type="entry name" value="Phe/His_NH3-lyase_AS"/>
</dbReference>
<dbReference type="InterPro" id="IPR005922">
    <property type="entry name" value="Phe_NH3-lyase"/>
</dbReference>
<dbReference type="InterPro" id="IPR023144">
    <property type="entry name" value="Phe_NH3-lyase_shielding_dom_sf"/>
</dbReference>
<dbReference type="NCBIfam" id="TIGR01226">
    <property type="entry name" value="phe_am_lyase"/>
    <property type="match status" value="1"/>
</dbReference>
<dbReference type="PANTHER" id="PTHR10362">
    <property type="entry name" value="HISTIDINE AMMONIA-LYASE"/>
    <property type="match status" value="1"/>
</dbReference>
<dbReference type="Pfam" id="PF00221">
    <property type="entry name" value="Lyase_aromatic"/>
    <property type="match status" value="1"/>
</dbReference>
<dbReference type="SUPFAM" id="SSF48557">
    <property type="entry name" value="L-aspartase-like"/>
    <property type="match status" value="1"/>
</dbReference>
<dbReference type="PROSITE" id="PS00488">
    <property type="entry name" value="PAL_HISTIDASE"/>
    <property type="match status" value="1"/>
</dbReference>